<gene>
    <name evidence="1" type="primary">argG</name>
    <name type="ordered locus">BUAPTUC7_050</name>
</gene>
<keyword id="KW-0028">Amino-acid biosynthesis</keyword>
<keyword id="KW-0055">Arginine biosynthesis</keyword>
<keyword id="KW-0067">ATP-binding</keyword>
<keyword id="KW-0963">Cytoplasm</keyword>
<keyword id="KW-0436">Ligase</keyword>
<keyword id="KW-0547">Nucleotide-binding</keyword>
<organism>
    <name type="scientific">Buchnera aphidicola subsp. Acyrthosiphon pisum (strain Tuc7)</name>
    <dbReference type="NCBI Taxonomy" id="561501"/>
    <lineage>
        <taxon>Bacteria</taxon>
        <taxon>Pseudomonadati</taxon>
        <taxon>Pseudomonadota</taxon>
        <taxon>Gammaproteobacteria</taxon>
        <taxon>Enterobacterales</taxon>
        <taxon>Erwiniaceae</taxon>
        <taxon>Buchnera</taxon>
    </lineage>
</organism>
<feature type="chain" id="PRO_1000191886" description="Argininosuccinate synthase">
    <location>
        <begin position="1"/>
        <end position="403"/>
    </location>
</feature>
<feature type="binding site" evidence="1">
    <location>
        <begin position="12"/>
        <end position="20"/>
    </location>
    <ligand>
        <name>ATP</name>
        <dbReference type="ChEBI" id="CHEBI:30616"/>
    </ligand>
</feature>
<feature type="binding site" evidence="1">
    <location>
        <position position="39"/>
    </location>
    <ligand>
        <name>ATP</name>
        <dbReference type="ChEBI" id="CHEBI:30616"/>
    </ligand>
</feature>
<feature type="binding site" evidence="1">
    <location>
        <position position="91"/>
    </location>
    <ligand>
        <name>L-citrulline</name>
        <dbReference type="ChEBI" id="CHEBI:57743"/>
    </ligand>
</feature>
<feature type="binding site" evidence="1">
    <location>
        <position position="121"/>
    </location>
    <ligand>
        <name>ATP</name>
        <dbReference type="ChEBI" id="CHEBI:30616"/>
    </ligand>
</feature>
<feature type="binding site" evidence="1">
    <location>
        <position position="123"/>
    </location>
    <ligand>
        <name>L-aspartate</name>
        <dbReference type="ChEBI" id="CHEBI:29991"/>
    </ligand>
</feature>
<feature type="binding site" evidence="1">
    <location>
        <position position="127"/>
    </location>
    <ligand>
        <name>L-aspartate</name>
        <dbReference type="ChEBI" id="CHEBI:29991"/>
    </ligand>
</feature>
<feature type="binding site" evidence="1">
    <location>
        <position position="127"/>
    </location>
    <ligand>
        <name>L-citrulline</name>
        <dbReference type="ChEBI" id="CHEBI:57743"/>
    </ligand>
</feature>
<feature type="binding site" evidence="1">
    <location>
        <position position="128"/>
    </location>
    <ligand>
        <name>L-aspartate</name>
        <dbReference type="ChEBI" id="CHEBI:29991"/>
    </ligand>
</feature>
<feature type="binding site" evidence="1">
    <location>
        <position position="131"/>
    </location>
    <ligand>
        <name>L-citrulline</name>
        <dbReference type="ChEBI" id="CHEBI:57743"/>
    </ligand>
</feature>
<feature type="binding site" evidence="1">
    <location>
        <position position="180"/>
    </location>
    <ligand>
        <name>L-citrulline</name>
        <dbReference type="ChEBI" id="CHEBI:57743"/>
    </ligand>
</feature>
<feature type="binding site" evidence="1">
    <location>
        <position position="189"/>
    </location>
    <ligand>
        <name>L-citrulline</name>
        <dbReference type="ChEBI" id="CHEBI:57743"/>
    </ligand>
</feature>
<feature type="binding site" evidence="1">
    <location>
        <position position="265"/>
    </location>
    <ligand>
        <name>L-citrulline</name>
        <dbReference type="ChEBI" id="CHEBI:57743"/>
    </ligand>
</feature>
<feature type="binding site" evidence="1">
    <location>
        <position position="277"/>
    </location>
    <ligand>
        <name>L-citrulline</name>
        <dbReference type="ChEBI" id="CHEBI:57743"/>
    </ligand>
</feature>
<accession>B8D6W2</accession>
<sequence>MIRKKNNKVVLAYSGGLDTSAIIPWLKENYNFEVVAFVADIGQSKKDLNGIEKKSLESGASSCHVFDLKEEFIENYVYPVLKTGALYEGSYLLGTAMARPIIAKKQVELALNIGANSLCHGATGKGNDQVRFEMAYAALAPNLNVIAPWREWNLNSRESLLKYLDKKNISTTATLEKIYSKDENSWHISTEGGLLENPWNQSNEDCWSWTVNPEDAPEKPEYVSLQLKEGCVVSVNNQKLNPLKCVEELNSLGAKHGIGRIDIIENRLIGMKSRGCYETPGGTIIMTAIKAIEQLVLDRESFRWREKIGLEMSSIVYDGRWFSPIRKSLQAAADSLSLEITGEVILKLYKGSVTAVQKKSPNSLYSEEYATFGEDKVYKQSDADGFIRLFSLSSKIRAQNMLK</sequence>
<name>ASSY_BUCAT</name>
<evidence type="ECO:0000255" key="1">
    <source>
        <dbReference type="HAMAP-Rule" id="MF_00005"/>
    </source>
</evidence>
<reference key="1">
    <citation type="journal article" date="2009" name="Science">
        <title>The dynamics and time scale of ongoing genomic erosion in symbiotic bacteria.</title>
        <authorList>
            <person name="Moran N.A."/>
            <person name="McLaughlin H.J."/>
            <person name="Sorek R."/>
        </authorList>
    </citation>
    <scope>NUCLEOTIDE SEQUENCE [LARGE SCALE GENOMIC DNA]</scope>
    <source>
        <strain>Tuc7</strain>
    </source>
</reference>
<dbReference type="EC" id="6.3.4.5" evidence="1"/>
<dbReference type="EMBL" id="CP001158">
    <property type="protein sequence ID" value="ACL29877.1"/>
    <property type="molecule type" value="Genomic_DNA"/>
</dbReference>
<dbReference type="RefSeq" id="WP_009874007.1">
    <property type="nucleotide sequence ID" value="NC_011834.1"/>
</dbReference>
<dbReference type="SMR" id="B8D6W2"/>
<dbReference type="KEGG" id="bau:BUAPTUC7_050"/>
<dbReference type="HOGENOM" id="CLU_032784_4_2_6"/>
<dbReference type="UniPathway" id="UPA00068">
    <property type="reaction ID" value="UER00113"/>
</dbReference>
<dbReference type="GO" id="GO:0005737">
    <property type="term" value="C:cytoplasm"/>
    <property type="evidence" value="ECO:0007669"/>
    <property type="project" value="UniProtKB-SubCell"/>
</dbReference>
<dbReference type="GO" id="GO:0004055">
    <property type="term" value="F:argininosuccinate synthase activity"/>
    <property type="evidence" value="ECO:0007669"/>
    <property type="project" value="UniProtKB-UniRule"/>
</dbReference>
<dbReference type="GO" id="GO:0005524">
    <property type="term" value="F:ATP binding"/>
    <property type="evidence" value="ECO:0007669"/>
    <property type="project" value="UniProtKB-UniRule"/>
</dbReference>
<dbReference type="GO" id="GO:0000053">
    <property type="term" value="P:argininosuccinate metabolic process"/>
    <property type="evidence" value="ECO:0007669"/>
    <property type="project" value="TreeGrafter"/>
</dbReference>
<dbReference type="GO" id="GO:0006526">
    <property type="term" value="P:L-arginine biosynthetic process"/>
    <property type="evidence" value="ECO:0007669"/>
    <property type="project" value="UniProtKB-UniRule"/>
</dbReference>
<dbReference type="GO" id="GO:0000050">
    <property type="term" value="P:urea cycle"/>
    <property type="evidence" value="ECO:0007669"/>
    <property type="project" value="TreeGrafter"/>
</dbReference>
<dbReference type="CDD" id="cd01999">
    <property type="entry name" value="ASS"/>
    <property type="match status" value="1"/>
</dbReference>
<dbReference type="FunFam" id="3.40.50.620:FF:000019">
    <property type="entry name" value="Argininosuccinate synthase"/>
    <property type="match status" value="1"/>
</dbReference>
<dbReference type="FunFam" id="3.90.1260.10:FF:000007">
    <property type="entry name" value="Argininosuccinate synthase"/>
    <property type="match status" value="1"/>
</dbReference>
<dbReference type="Gene3D" id="3.90.1260.10">
    <property type="entry name" value="Argininosuccinate synthetase, chain A, domain 2"/>
    <property type="match status" value="1"/>
</dbReference>
<dbReference type="Gene3D" id="3.40.50.620">
    <property type="entry name" value="HUPs"/>
    <property type="match status" value="1"/>
</dbReference>
<dbReference type="Gene3D" id="1.20.5.470">
    <property type="entry name" value="Single helix bin"/>
    <property type="match status" value="1"/>
</dbReference>
<dbReference type="HAMAP" id="MF_00005">
    <property type="entry name" value="Arg_succ_synth_type1"/>
    <property type="match status" value="1"/>
</dbReference>
<dbReference type="InterPro" id="IPR048268">
    <property type="entry name" value="Arginosuc_syn_C"/>
</dbReference>
<dbReference type="InterPro" id="IPR048267">
    <property type="entry name" value="Arginosuc_syn_N"/>
</dbReference>
<dbReference type="InterPro" id="IPR001518">
    <property type="entry name" value="Arginosuc_synth"/>
</dbReference>
<dbReference type="InterPro" id="IPR018223">
    <property type="entry name" value="Arginosuc_synth_CS"/>
</dbReference>
<dbReference type="InterPro" id="IPR023434">
    <property type="entry name" value="Arginosuc_synth_type_1_subfam"/>
</dbReference>
<dbReference type="InterPro" id="IPR024074">
    <property type="entry name" value="AS_cat/multimer_dom_body"/>
</dbReference>
<dbReference type="InterPro" id="IPR014729">
    <property type="entry name" value="Rossmann-like_a/b/a_fold"/>
</dbReference>
<dbReference type="NCBIfam" id="TIGR00032">
    <property type="entry name" value="argG"/>
    <property type="match status" value="1"/>
</dbReference>
<dbReference type="NCBIfam" id="NF001770">
    <property type="entry name" value="PRK00509.1"/>
    <property type="match status" value="1"/>
</dbReference>
<dbReference type="PANTHER" id="PTHR11587">
    <property type="entry name" value="ARGININOSUCCINATE SYNTHASE"/>
    <property type="match status" value="1"/>
</dbReference>
<dbReference type="PANTHER" id="PTHR11587:SF2">
    <property type="entry name" value="ARGININOSUCCINATE SYNTHASE"/>
    <property type="match status" value="1"/>
</dbReference>
<dbReference type="Pfam" id="PF20979">
    <property type="entry name" value="Arginosuc_syn_C"/>
    <property type="match status" value="1"/>
</dbReference>
<dbReference type="Pfam" id="PF00764">
    <property type="entry name" value="Arginosuc_synth"/>
    <property type="match status" value="1"/>
</dbReference>
<dbReference type="SUPFAM" id="SSF52402">
    <property type="entry name" value="Adenine nucleotide alpha hydrolases-like"/>
    <property type="match status" value="1"/>
</dbReference>
<dbReference type="SUPFAM" id="SSF69864">
    <property type="entry name" value="Argininosuccinate synthetase, C-terminal domain"/>
    <property type="match status" value="1"/>
</dbReference>
<dbReference type="PROSITE" id="PS00564">
    <property type="entry name" value="ARGININOSUCCIN_SYN_1"/>
    <property type="match status" value="1"/>
</dbReference>
<dbReference type="PROSITE" id="PS00565">
    <property type="entry name" value="ARGININOSUCCIN_SYN_2"/>
    <property type="match status" value="1"/>
</dbReference>
<comment type="catalytic activity">
    <reaction evidence="1">
        <text>L-citrulline + L-aspartate + ATP = 2-(N(omega)-L-arginino)succinate + AMP + diphosphate + H(+)</text>
        <dbReference type="Rhea" id="RHEA:10932"/>
        <dbReference type="ChEBI" id="CHEBI:15378"/>
        <dbReference type="ChEBI" id="CHEBI:29991"/>
        <dbReference type="ChEBI" id="CHEBI:30616"/>
        <dbReference type="ChEBI" id="CHEBI:33019"/>
        <dbReference type="ChEBI" id="CHEBI:57472"/>
        <dbReference type="ChEBI" id="CHEBI:57743"/>
        <dbReference type="ChEBI" id="CHEBI:456215"/>
        <dbReference type="EC" id="6.3.4.5"/>
    </reaction>
</comment>
<comment type="pathway">
    <text evidence="1">Amino-acid biosynthesis; L-arginine biosynthesis; L-arginine from L-ornithine and carbamoyl phosphate: step 2/3.</text>
</comment>
<comment type="subunit">
    <text evidence="1">Homotetramer.</text>
</comment>
<comment type="subcellular location">
    <subcellularLocation>
        <location evidence="1">Cytoplasm</location>
    </subcellularLocation>
</comment>
<comment type="similarity">
    <text evidence="1">Belongs to the argininosuccinate synthase family. Type 1 subfamily.</text>
</comment>
<proteinExistence type="inferred from homology"/>
<protein>
    <recommendedName>
        <fullName evidence="1">Argininosuccinate synthase</fullName>
        <ecNumber evidence="1">6.3.4.5</ecNumber>
    </recommendedName>
    <alternativeName>
        <fullName evidence="1">Citrulline--aspartate ligase</fullName>
    </alternativeName>
</protein>